<keyword id="KW-0145">Chemotaxis</keyword>
<keyword id="KW-0378">Hydrolase</keyword>
<reference key="1">
    <citation type="submission" date="2008-05" db="EMBL/GenBank/DDBJ databases">
        <title>Complete sequence of chromosome 2 of Ralstonia pickettii 12J.</title>
        <authorList>
            <person name="Lucas S."/>
            <person name="Copeland A."/>
            <person name="Lapidus A."/>
            <person name="Glavina del Rio T."/>
            <person name="Dalin E."/>
            <person name="Tice H."/>
            <person name="Bruce D."/>
            <person name="Goodwin L."/>
            <person name="Pitluck S."/>
            <person name="Meincke L."/>
            <person name="Brettin T."/>
            <person name="Detter J.C."/>
            <person name="Han C."/>
            <person name="Kuske C.R."/>
            <person name="Schmutz J."/>
            <person name="Larimer F."/>
            <person name="Land M."/>
            <person name="Hauser L."/>
            <person name="Kyrpides N."/>
            <person name="Mikhailova N."/>
            <person name="Marsh T."/>
            <person name="Richardson P."/>
        </authorList>
    </citation>
    <scope>NUCLEOTIDE SEQUENCE [LARGE SCALE GENOMIC DNA]</scope>
    <source>
        <strain>12J</strain>
    </source>
</reference>
<name>CHED_RALPJ</name>
<sequence length="236" mass="25446">MIEFGKRATPQSAADAVRGDSGMASGMSAGAMATLAQSAASTHAYYDTTFSRRAMKVLPGEYSVTTEDLMLVTVLGSCVSACVRDKTLGIGGMNHFMLPSRNEGESILSPSMRYGTHAMEVLLNQLYKAGAKRERLEIKVFGGAAVLAGMSTLDVGERNGKFVLEFLRNEGLTVAAKDLFDVHPRKVYFVPSTGQIMVRKLRSQNSAAELDSEAQYASKLSKSITTKPASRLQLFT</sequence>
<proteinExistence type="inferred from homology"/>
<feature type="chain" id="PRO_1000145892" description="Probable chemoreceptor glutamine deamidase CheD">
    <location>
        <begin position="1"/>
        <end position="236"/>
    </location>
</feature>
<feature type="region of interest" description="Disordered" evidence="2">
    <location>
        <begin position="1"/>
        <end position="20"/>
    </location>
</feature>
<organism>
    <name type="scientific">Ralstonia pickettii (strain 12J)</name>
    <dbReference type="NCBI Taxonomy" id="402626"/>
    <lineage>
        <taxon>Bacteria</taxon>
        <taxon>Pseudomonadati</taxon>
        <taxon>Pseudomonadota</taxon>
        <taxon>Betaproteobacteria</taxon>
        <taxon>Burkholderiales</taxon>
        <taxon>Burkholderiaceae</taxon>
        <taxon>Ralstonia</taxon>
    </lineage>
</organism>
<protein>
    <recommendedName>
        <fullName evidence="1">Probable chemoreceptor glutamine deamidase CheD</fullName>
        <ecNumber evidence="1">3.5.1.44</ecNumber>
    </recommendedName>
</protein>
<comment type="function">
    <text evidence="1">Probably deamidates glutamine residues to glutamate on methyl-accepting chemotaxis receptors (MCPs), playing an important role in chemotaxis.</text>
</comment>
<comment type="catalytic activity">
    <reaction evidence="1">
        <text>L-glutaminyl-[protein] + H2O = L-glutamyl-[protein] + NH4(+)</text>
        <dbReference type="Rhea" id="RHEA:16441"/>
        <dbReference type="Rhea" id="RHEA-COMP:10207"/>
        <dbReference type="Rhea" id="RHEA-COMP:10208"/>
        <dbReference type="ChEBI" id="CHEBI:15377"/>
        <dbReference type="ChEBI" id="CHEBI:28938"/>
        <dbReference type="ChEBI" id="CHEBI:29973"/>
        <dbReference type="ChEBI" id="CHEBI:30011"/>
        <dbReference type="EC" id="3.5.1.44"/>
    </reaction>
</comment>
<comment type="similarity">
    <text evidence="1">Belongs to the CheD family.</text>
</comment>
<accession>B2UHV5</accession>
<evidence type="ECO:0000255" key="1">
    <source>
        <dbReference type="HAMAP-Rule" id="MF_01440"/>
    </source>
</evidence>
<evidence type="ECO:0000256" key="2">
    <source>
        <dbReference type="SAM" id="MobiDB-lite"/>
    </source>
</evidence>
<dbReference type="EC" id="3.5.1.44" evidence="1"/>
<dbReference type="EMBL" id="CP001069">
    <property type="protein sequence ID" value="ACD29156.1"/>
    <property type="molecule type" value="Genomic_DNA"/>
</dbReference>
<dbReference type="SMR" id="B2UHV5"/>
<dbReference type="STRING" id="402626.Rpic_4053"/>
<dbReference type="KEGG" id="rpi:Rpic_4053"/>
<dbReference type="eggNOG" id="COG1871">
    <property type="taxonomic scope" value="Bacteria"/>
</dbReference>
<dbReference type="HOGENOM" id="CLU_087854_0_0_4"/>
<dbReference type="GO" id="GO:0050568">
    <property type="term" value="F:protein-glutamine glutaminase activity"/>
    <property type="evidence" value="ECO:0007669"/>
    <property type="project" value="UniProtKB-UniRule"/>
</dbReference>
<dbReference type="GO" id="GO:0006935">
    <property type="term" value="P:chemotaxis"/>
    <property type="evidence" value="ECO:0007669"/>
    <property type="project" value="UniProtKB-UniRule"/>
</dbReference>
<dbReference type="CDD" id="cd16352">
    <property type="entry name" value="CheD"/>
    <property type="match status" value="1"/>
</dbReference>
<dbReference type="Gene3D" id="3.30.1330.200">
    <property type="match status" value="1"/>
</dbReference>
<dbReference type="HAMAP" id="MF_01440">
    <property type="entry name" value="CheD"/>
    <property type="match status" value="1"/>
</dbReference>
<dbReference type="InterPro" id="IPR038592">
    <property type="entry name" value="CheD-like_sf"/>
</dbReference>
<dbReference type="InterPro" id="IPR005659">
    <property type="entry name" value="Chemorcpt_Glu_NH3ase_CheD"/>
</dbReference>
<dbReference type="InterPro" id="IPR011324">
    <property type="entry name" value="Cytotoxic_necrot_fac-like_cat"/>
</dbReference>
<dbReference type="NCBIfam" id="NF010013">
    <property type="entry name" value="PRK13487.1"/>
    <property type="match status" value="1"/>
</dbReference>
<dbReference type="PANTHER" id="PTHR35147">
    <property type="entry name" value="CHEMORECEPTOR GLUTAMINE DEAMIDASE CHED-RELATED"/>
    <property type="match status" value="1"/>
</dbReference>
<dbReference type="PANTHER" id="PTHR35147:SF2">
    <property type="entry name" value="CHEMORECEPTOR GLUTAMINE DEAMIDASE CHED-RELATED"/>
    <property type="match status" value="1"/>
</dbReference>
<dbReference type="Pfam" id="PF03975">
    <property type="entry name" value="CheD"/>
    <property type="match status" value="1"/>
</dbReference>
<dbReference type="SUPFAM" id="SSF64438">
    <property type="entry name" value="CNF1/YfiH-like putative cysteine hydrolases"/>
    <property type="match status" value="1"/>
</dbReference>
<gene>
    <name evidence="1" type="primary">cheD</name>
    <name type="ordered locus">Rpic_4053</name>
</gene>